<protein>
    <recommendedName>
        <fullName>26 kDa endochitinase 1</fullName>
        <ecNumber>3.2.1.14</ecNumber>
    </recommendedName>
</protein>
<evidence type="ECO:0000250" key="1">
    <source>
        <dbReference type="UniProtKB" id="P29022"/>
    </source>
</evidence>
<evidence type="ECO:0000255" key="2"/>
<evidence type="ECO:0000255" key="3">
    <source>
        <dbReference type="PROSITE-ProRule" id="PRU00261"/>
    </source>
</evidence>
<evidence type="ECO:0000305" key="4"/>
<accession>P11955</accession>
<keyword id="KW-0119">Carbohydrate metabolism</keyword>
<keyword id="KW-0146">Chitin degradation</keyword>
<keyword id="KW-0147">Chitin-binding</keyword>
<keyword id="KW-1015">Disulfide bond</keyword>
<keyword id="KW-0326">Glycosidase</keyword>
<keyword id="KW-0378">Hydrolase</keyword>
<keyword id="KW-0611">Plant defense</keyword>
<keyword id="KW-0624">Polysaccharide degradation</keyword>
<keyword id="KW-0732">Signal</keyword>
<comment type="function">
    <text>Defense against chitin-containing fungal pathogens.</text>
</comment>
<comment type="catalytic activity">
    <reaction>
        <text>Random endo-hydrolysis of N-acetyl-beta-D-glucosaminide (1-&gt;4)-beta-linkages in chitin and chitodextrins.</text>
        <dbReference type="EC" id="3.2.1.14"/>
    </reaction>
</comment>
<comment type="induction">
    <text>By ethylene.</text>
</comment>
<comment type="similarity">
    <text evidence="4">Belongs to the glycosyl hydrolase 19 family. Chitinase class I subfamily.</text>
</comment>
<name>CHI1_HORVU</name>
<sequence length="318" mass="33402">MRAFVLFAVVAMAATMAVAEQCGSQAGGATCPNCLCCSRFGWCGSTPYCGDGCQSQCSGCGGGSTPVTPTPSGGGGVSSIVSRALFDRMLLHRNDGACQAKGFYTYDAFVAAASAFRGFGTTGGTDTRKREVAAFLAQTSHETTGGWATAPDGAFAWGYCFKQERGATSNYCTPSAQWPCAPGKSYYGRGPIQLSHNYNYGPAGRAIGVDLLRNPDLVATDPTVSFKTAMWFWMTAQAPKPSSHAVITGQWSPSGTDRAAGRVPGFGVITNIVNGGIECGHGQDSRVADRIGFYKRYCDILGVGYGNNLDCYSQRPFA</sequence>
<proteinExistence type="evidence at transcript level"/>
<organism>
    <name type="scientific">Hordeum vulgare</name>
    <name type="common">Barley</name>
    <dbReference type="NCBI Taxonomy" id="4513"/>
    <lineage>
        <taxon>Eukaryota</taxon>
        <taxon>Viridiplantae</taxon>
        <taxon>Streptophyta</taxon>
        <taxon>Embryophyta</taxon>
        <taxon>Tracheophyta</taxon>
        <taxon>Spermatophyta</taxon>
        <taxon>Magnoliopsida</taxon>
        <taxon>Liliopsida</taxon>
        <taxon>Poales</taxon>
        <taxon>Poaceae</taxon>
        <taxon>BOP clade</taxon>
        <taxon>Pooideae</taxon>
        <taxon>Triticodae</taxon>
        <taxon>Triticeae</taxon>
        <taxon>Hordeinae</taxon>
        <taxon>Hordeum</taxon>
    </lineage>
</organism>
<reference key="1">
    <citation type="submission" date="1994-06" db="EMBL/GenBank/DDBJ databases">
        <authorList>
            <person name="Ignatius S.M.J."/>
            <person name="Huang J."/>
            <person name="Muthukrishnan S."/>
        </authorList>
    </citation>
    <scope>NUCLEOTIDE SEQUENCE</scope>
    <source>
        <strain>cv. NK 1558</strain>
        <tissue>Leaf</tissue>
    </source>
</reference>
<reference key="2">
    <citation type="journal article" date="1989" name="Plant Mol. Biol.">
        <title>Identification of an endochitinase cDNA clone from barley aleurone cells.</title>
        <authorList>
            <person name="Swegle M."/>
            <person name="Huang J.-K."/>
            <person name="Lee G."/>
            <person name="Muthukrishnan S."/>
        </authorList>
    </citation>
    <scope>NUCLEOTIDE SEQUENCE OF 141-318</scope>
    <source>
        <strain>cv. Himalaya</strain>
    </source>
</reference>
<dbReference type="EC" id="3.2.1.14"/>
<dbReference type="EMBL" id="U02287">
    <property type="protein sequence ID" value="AAA18586.1"/>
    <property type="molecule type" value="Unassigned_DNA"/>
</dbReference>
<dbReference type="EMBL" id="X15349">
    <property type="protein sequence ID" value="CAA33407.1"/>
    <property type="molecule type" value="mRNA"/>
</dbReference>
<dbReference type="PIR" id="S04131">
    <property type="entry name" value="S04131"/>
</dbReference>
<dbReference type="PIR" id="T04403">
    <property type="entry name" value="T04403"/>
</dbReference>
<dbReference type="SMR" id="P11955"/>
<dbReference type="CAZy" id="CBM18">
    <property type="family name" value="Carbohydrate-Binding Module Family 18"/>
</dbReference>
<dbReference type="CAZy" id="GH19">
    <property type="family name" value="Glycoside Hydrolase Family 19"/>
</dbReference>
<dbReference type="BRENDA" id="3.2.1.14">
    <property type="organism ID" value="2687"/>
</dbReference>
<dbReference type="ExpressionAtlas" id="P11955">
    <property type="expression patterns" value="baseline and differential"/>
</dbReference>
<dbReference type="GO" id="GO:0008061">
    <property type="term" value="F:chitin binding"/>
    <property type="evidence" value="ECO:0007669"/>
    <property type="project" value="UniProtKB-KW"/>
</dbReference>
<dbReference type="GO" id="GO:0008843">
    <property type="term" value="F:endochitinase activity"/>
    <property type="evidence" value="ECO:0007669"/>
    <property type="project" value="UniProtKB-EC"/>
</dbReference>
<dbReference type="GO" id="GO:0016998">
    <property type="term" value="P:cell wall macromolecule catabolic process"/>
    <property type="evidence" value="ECO:0007669"/>
    <property type="project" value="InterPro"/>
</dbReference>
<dbReference type="GO" id="GO:0006032">
    <property type="term" value="P:chitin catabolic process"/>
    <property type="evidence" value="ECO:0007669"/>
    <property type="project" value="UniProtKB-KW"/>
</dbReference>
<dbReference type="GO" id="GO:0050832">
    <property type="term" value="P:defense response to fungus"/>
    <property type="evidence" value="ECO:0007669"/>
    <property type="project" value="TreeGrafter"/>
</dbReference>
<dbReference type="GO" id="GO:0000272">
    <property type="term" value="P:polysaccharide catabolic process"/>
    <property type="evidence" value="ECO:0007669"/>
    <property type="project" value="UniProtKB-KW"/>
</dbReference>
<dbReference type="CDD" id="cd00325">
    <property type="entry name" value="chitinase_GH19"/>
    <property type="match status" value="1"/>
</dbReference>
<dbReference type="CDD" id="cd06921">
    <property type="entry name" value="ChtBD1_GH19_hevein"/>
    <property type="match status" value="1"/>
</dbReference>
<dbReference type="FunFam" id="3.30.60.10:FF:000001">
    <property type="entry name" value="Basic endochitinase"/>
    <property type="match status" value="1"/>
</dbReference>
<dbReference type="FunFam" id="3.30.20.10:FF:000001">
    <property type="entry name" value="Endochitinase (Chitinase)"/>
    <property type="match status" value="1"/>
</dbReference>
<dbReference type="Gene3D" id="1.10.530.10">
    <property type="match status" value="1"/>
</dbReference>
<dbReference type="Gene3D" id="3.30.20.10">
    <property type="entry name" value="Endochitinase, domain 2"/>
    <property type="match status" value="1"/>
</dbReference>
<dbReference type="Gene3D" id="3.30.60.10">
    <property type="entry name" value="Endochitinase-like"/>
    <property type="match status" value="1"/>
</dbReference>
<dbReference type="InterPro" id="IPR001002">
    <property type="entry name" value="Chitin-bd_1"/>
</dbReference>
<dbReference type="InterPro" id="IPR018371">
    <property type="entry name" value="Chitin-binding_1_CS"/>
</dbReference>
<dbReference type="InterPro" id="IPR036861">
    <property type="entry name" value="Endochitinase-like_sf"/>
</dbReference>
<dbReference type="InterPro" id="IPR016283">
    <property type="entry name" value="Glyco_hydro_19"/>
</dbReference>
<dbReference type="InterPro" id="IPR000726">
    <property type="entry name" value="Glyco_hydro_19_cat"/>
</dbReference>
<dbReference type="InterPro" id="IPR023346">
    <property type="entry name" value="Lysozyme-like_dom_sf"/>
</dbReference>
<dbReference type="PANTHER" id="PTHR22595:SF118">
    <property type="entry name" value="CHITINASE"/>
    <property type="match status" value="1"/>
</dbReference>
<dbReference type="PANTHER" id="PTHR22595">
    <property type="entry name" value="CHITINASE-RELATED"/>
    <property type="match status" value="1"/>
</dbReference>
<dbReference type="Pfam" id="PF00187">
    <property type="entry name" value="Chitin_bind_1"/>
    <property type="match status" value="1"/>
</dbReference>
<dbReference type="Pfam" id="PF00182">
    <property type="entry name" value="Glyco_hydro_19"/>
    <property type="match status" value="1"/>
</dbReference>
<dbReference type="PIRSF" id="PIRSF001060">
    <property type="entry name" value="Endochitinase"/>
    <property type="match status" value="1"/>
</dbReference>
<dbReference type="PRINTS" id="PR00451">
    <property type="entry name" value="CHITINBINDNG"/>
</dbReference>
<dbReference type="SMART" id="SM00270">
    <property type="entry name" value="ChtBD1"/>
    <property type="match status" value="1"/>
</dbReference>
<dbReference type="SUPFAM" id="SSF53955">
    <property type="entry name" value="Lysozyme-like"/>
    <property type="match status" value="1"/>
</dbReference>
<dbReference type="SUPFAM" id="SSF57016">
    <property type="entry name" value="Plant lectins/antimicrobial peptides"/>
    <property type="match status" value="1"/>
</dbReference>
<dbReference type="PROSITE" id="PS00026">
    <property type="entry name" value="CHIT_BIND_I_1"/>
    <property type="match status" value="1"/>
</dbReference>
<dbReference type="PROSITE" id="PS50941">
    <property type="entry name" value="CHIT_BIND_I_2"/>
    <property type="match status" value="1"/>
</dbReference>
<dbReference type="PROSITE" id="PS00773">
    <property type="entry name" value="CHITINASE_19_1"/>
    <property type="match status" value="1"/>
</dbReference>
<dbReference type="PROSITE" id="PS00774">
    <property type="entry name" value="CHITINASE_19_2"/>
    <property type="match status" value="1"/>
</dbReference>
<feature type="signal peptide" evidence="2">
    <location>
        <begin position="1"/>
        <end position="19"/>
    </location>
</feature>
<feature type="chain" id="PRO_0000005296" description="26 kDa endochitinase 1">
    <location>
        <begin position="20"/>
        <end position="318"/>
    </location>
</feature>
<feature type="domain" description="Chitin-binding type-1" evidence="3">
    <location>
        <begin position="20"/>
        <end position="59"/>
    </location>
</feature>
<feature type="active site" description="Proton donor" evidence="1">
    <location>
        <position position="142"/>
    </location>
</feature>
<feature type="disulfide bond" evidence="3">
    <location>
        <begin position="22"/>
        <end position="37"/>
    </location>
</feature>
<feature type="disulfide bond" evidence="3">
    <location>
        <begin position="31"/>
        <end position="43"/>
    </location>
</feature>
<feature type="disulfide bond" evidence="3">
    <location>
        <begin position="36"/>
        <end position="49"/>
    </location>
</feature>
<feature type="disulfide bond" evidence="3">
    <location>
        <begin position="53"/>
        <end position="57"/>
    </location>
</feature>
<feature type="disulfide bond" evidence="3">
    <location>
        <begin position="98"/>
        <end position="160"/>
    </location>
</feature>
<feature type="disulfide bond" evidence="3">
    <location>
        <begin position="172"/>
        <end position="180"/>
    </location>
</feature>
<feature type="disulfide bond" evidence="3">
    <location>
        <begin position="279"/>
        <end position="311"/>
    </location>
</feature>